<organism>
    <name type="scientific">Streptococcus pneumoniae serotype 4 (strain ATCC BAA-334 / TIGR4)</name>
    <dbReference type="NCBI Taxonomy" id="170187"/>
    <lineage>
        <taxon>Bacteria</taxon>
        <taxon>Bacillati</taxon>
        <taxon>Bacillota</taxon>
        <taxon>Bacilli</taxon>
        <taxon>Lactobacillales</taxon>
        <taxon>Streptococcaceae</taxon>
        <taxon>Streptococcus</taxon>
    </lineage>
</organism>
<feature type="signal peptide" evidence="1">
    <location>
        <begin position="1"/>
        <end position="23"/>
    </location>
</feature>
<feature type="chain" id="PRO_0000012116" description="Putative endo-beta-N-acetylglucosaminidase">
    <location>
        <begin position="24"/>
        <end position="658"/>
    </location>
</feature>
<feature type="repeat" description="Cell wall-binding 1">
    <location>
        <begin position="42"/>
        <end position="63"/>
    </location>
</feature>
<feature type="repeat" description="Cell wall-binding 2">
    <location>
        <begin position="65"/>
        <end position="84"/>
    </location>
</feature>
<feature type="repeat" description="Cell wall-binding 3">
    <location>
        <begin position="86"/>
        <end position="105"/>
    </location>
</feature>
<feature type="repeat" description="Cell wall-binding 4">
    <location>
        <begin position="124"/>
        <end position="145"/>
    </location>
</feature>
<feature type="repeat" description="Cell wall-binding 5">
    <location>
        <begin position="147"/>
        <end position="166"/>
    </location>
</feature>
<feature type="repeat" description="Cell wall-binding 6">
    <location>
        <begin position="185"/>
        <end position="206"/>
    </location>
</feature>
<feature type="repeat" description="Cell wall-binding 7">
    <location>
        <begin position="208"/>
        <end position="227"/>
    </location>
</feature>
<feature type="repeat" description="Cell wall-binding 8">
    <location>
        <begin position="229"/>
        <end position="248"/>
    </location>
</feature>
<feature type="repeat" description="Cell wall-binding 9">
    <location>
        <begin position="250"/>
        <end position="271"/>
    </location>
</feature>
<feature type="repeat" description="Cell wall-binding 10">
    <location>
        <begin position="273"/>
        <end position="292"/>
    </location>
</feature>
<feature type="repeat" description="Cell wall-binding 11">
    <location>
        <begin position="294"/>
        <end position="315"/>
    </location>
</feature>
<feature type="repeat" description="Cell wall-binding 12">
    <location>
        <begin position="317"/>
        <end position="336"/>
    </location>
</feature>
<feature type="repeat" description="Cell wall-binding 13">
    <location>
        <begin position="338"/>
        <end position="359"/>
    </location>
</feature>
<feature type="strand" evidence="3">
    <location>
        <begin position="387"/>
        <end position="391"/>
    </location>
</feature>
<feature type="strand" evidence="3">
    <location>
        <begin position="393"/>
        <end position="399"/>
    </location>
</feature>
<feature type="strand" evidence="3">
    <location>
        <begin position="405"/>
        <end position="410"/>
    </location>
</feature>
<feature type="strand" evidence="3">
    <location>
        <begin position="414"/>
        <end position="417"/>
    </location>
</feature>
<feature type="strand" evidence="3">
    <location>
        <begin position="425"/>
        <end position="432"/>
    </location>
</feature>
<feature type="strand" evidence="3">
    <location>
        <begin position="435"/>
        <end position="440"/>
    </location>
</feature>
<feature type="helix" evidence="3">
    <location>
        <begin position="441"/>
        <end position="443"/>
    </location>
</feature>
<feature type="strand" evidence="3">
    <location>
        <begin position="444"/>
        <end position="446"/>
    </location>
</feature>
<feature type="turn" evidence="3">
    <location>
        <begin position="449"/>
        <end position="451"/>
    </location>
</feature>
<feature type="strand" evidence="3">
    <location>
        <begin position="456"/>
        <end position="459"/>
    </location>
</feature>
<feature type="strand" evidence="3">
    <location>
        <begin position="461"/>
        <end position="469"/>
    </location>
</feature>
<feature type="strand" evidence="3">
    <location>
        <begin position="472"/>
        <end position="478"/>
    </location>
</feature>
<feature type="strand" evidence="3">
    <location>
        <begin position="492"/>
        <end position="496"/>
    </location>
</feature>
<feature type="turn" evidence="3">
    <location>
        <begin position="505"/>
        <end position="508"/>
    </location>
</feature>
<feature type="helix" evidence="3">
    <location>
        <begin position="519"/>
        <end position="528"/>
    </location>
</feature>
<feature type="turn" evidence="3">
    <location>
        <begin position="535"/>
        <end position="538"/>
    </location>
</feature>
<feature type="helix" evidence="3">
    <location>
        <begin position="540"/>
        <end position="550"/>
    </location>
</feature>
<feature type="helix" evidence="3">
    <location>
        <begin position="554"/>
        <end position="565"/>
    </location>
</feature>
<feature type="turn" evidence="3">
    <location>
        <begin position="566"/>
        <end position="569"/>
    </location>
</feature>
<feature type="helix" evidence="3">
    <location>
        <begin position="571"/>
        <end position="576"/>
    </location>
</feature>
<feature type="turn" evidence="4">
    <location>
        <begin position="589"/>
        <end position="592"/>
    </location>
</feature>
<feature type="helix" evidence="3">
    <location>
        <begin position="598"/>
        <end position="613"/>
    </location>
</feature>
<feature type="helix" evidence="3">
    <location>
        <begin position="615"/>
        <end position="617"/>
    </location>
</feature>
<feature type="strand" evidence="3">
    <location>
        <begin position="625"/>
        <end position="628"/>
    </location>
</feature>
<feature type="helix" evidence="3">
    <location>
        <begin position="630"/>
        <end position="633"/>
    </location>
</feature>
<feature type="helix" evidence="3">
    <location>
        <begin position="639"/>
        <end position="653"/>
    </location>
</feature>
<accession>P59205</accession>
<accession>Q9Z4P7</accession>
<dbReference type="EC" id="3.2.1.96"/>
<dbReference type="EMBL" id="AE005672">
    <property type="protein sequence ID" value="AAK75086.1"/>
    <property type="molecule type" value="Genomic_DNA"/>
</dbReference>
<dbReference type="PIR" id="E95111">
    <property type="entry name" value="E95111"/>
</dbReference>
<dbReference type="PDB" id="4Q2W">
    <property type="method" value="X-ray"/>
    <property type="resolution" value="1.65 A"/>
    <property type="chains" value="A=375-658"/>
</dbReference>
<dbReference type="PDB" id="7PL3">
    <property type="method" value="X-ray"/>
    <property type="resolution" value="1.80 A"/>
    <property type="chains" value="A=385-658"/>
</dbReference>
<dbReference type="PDBsum" id="4Q2W"/>
<dbReference type="PDBsum" id="7PL3"/>
<dbReference type="SMR" id="P59205"/>
<dbReference type="CAZy" id="GH73">
    <property type="family name" value="Glycoside Hydrolase Family 73"/>
</dbReference>
<dbReference type="PaxDb" id="170187-SP_0965"/>
<dbReference type="EnsemblBacteria" id="AAK75086">
    <property type="protein sequence ID" value="AAK75086"/>
    <property type="gene ID" value="SP_0965"/>
</dbReference>
<dbReference type="KEGG" id="spn:SP_0965"/>
<dbReference type="eggNOG" id="COG4193">
    <property type="taxonomic scope" value="Bacteria"/>
</dbReference>
<dbReference type="eggNOG" id="COG5263">
    <property type="taxonomic scope" value="Bacteria"/>
</dbReference>
<dbReference type="PhylomeDB" id="P59205"/>
<dbReference type="EvolutionaryTrace" id="P59205"/>
<dbReference type="Proteomes" id="UP000000585">
    <property type="component" value="Chromosome"/>
</dbReference>
<dbReference type="GO" id="GO:0005576">
    <property type="term" value="C:extracellular region"/>
    <property type="evidence" value="ECO:0007669"/>
    <property type="project" value="UniProtKB-SubCell"/>
</dbReference>
<dbReference type="GO" id="GO:0004040">
    <property type="term" value="F:amidase activity"/>
    <property type="evidence" value="ECO:0007669"/>
    <property type="project" value="InterPro"/>
</dbReference>
<dbReference type="GO" id="GO:0033925">
    <property type="term" value="F:mannosyl-glycoprotein endo-beta-N-acetylglucosaminidase activity"/>
    <property type="evidence" value="ECO:0007669"/>
    <property type="project" value="UniProtKB-EC"/>
</dbReference>
<dbReference type="GO" id="GO:0071555">
    <property type="term" value="P:cell wall organization"/>
    <property type="evidence" value="ECO:0007669"/>
    <property type="project" value="UniProtKB-KW"/>
</dbReference>
<dbReference type="Gene3D" id="1.10.530.10">
    <property type="match status" value="1"/>
</dbReference>
<dbReference type="Gene3D" id="2.10.270.10">
    <property type="entry name" value="Cholin Binding"/>
    <property type="match status" value="2"/>
</dbReference>
<dbReference type="Gene3D" id="2.20.120.10">
    <property type="entry name" value="Multimodular pneumococcal cell wall endolysin, domain 3"/>
    <property type="match status" value="4"/>
</dbReference>
<dbReference type="InterPro" id="IPR018337">
    <property type="entry name" value="Cell_wall/Cho-bd_repeat"/>
</dbReference>
<dbReference type="InterPro" id="IPR051056">
    <property type="entry name" value="Glycosyl_Hydrolase_73"/>
</dbReference>
<dbReference type="InterPro" id="IPR041074">
    <property type="entry name" value="LytB_SH3"/>
</dbReference>
<dbReference type="InterPro" id="IPR040742">
    <property type="entry name" value="LytB_WW-like"/>
</dbReference>
<dbReference type="InterPro" id="IPR002901">
    <property type="entry name" value="MGlyc_endo_b_GlcNAc-like_dom"/>
</dbReference>
<dbReference type="PANTHER" id="PTHR33308">
    <property type="entry name" value="PEPTIDOGLYCAN HYDROLASE FLGJ"/>
    <property type="match status" value="1"/>
</dbReference>
<dbReference type="PANTHER" id="PTHR33308:SF9">
    <property type="entry name" value="PEPTIDOGLYCAN HYDROLASE FLGJ"/>
    <property type="match status" value="1"/>
</dbReference>
<dbReference type="Pfam" id="PF01473">
    <property type="entry name" value="Choline_bind_1"/>
    <property type="match status" value="7"/>
</dbReference>
<dbReference type="Pfam" id="PF19085">
    <property type="entry name" value="Choline_bind_2"/>
    <property type="match status" value="2"/>
</dbReference>
<dbReference type="Pfam" id="PF01832">
    <property type="entry name" value="Glucosaminidase"/>
    <property type="match status" value="1"/>
</dbReference>
<dbReference type="Pfam" id="PF18342">
    <property type="entry name" value="LytB_SH3"/>
    <property type="match status" value="1"/>
</dbReference>
<dbReference type="Pfam" id="PF17890">
    <property type="entry name" value="WW_like"/>
    <property type="match status" value="1"/>
</dbReference>
<dbReference type="SMART" id="SM00047">
    <property type="entry name" value="LYZ2"/>
    <property type="match status" value="1"/>
</dbReference>
<dbReference type="SUPFAM" id="SSF69360">
    <property type="entry name" value="Cell wall binding repeat"/>
    <property type="match status" value="2"/>
</dbReference>
<dbReference type="PROSITE" id="PS51170">
    <property type="entry name" value="CW"/>
    <property type="match status" value="13"/>
</dbReference>
<name>LYTB_STRPN</name>
<proteinExistence type="evidence at protein level"/>
<evidence type="ECO:0000250" key="1"/>
<evidence type="ECO:0000305" key="2"/>
<evidence type="ECO:0007829" key="3">
    <source>
        <dbReference type="PDB" id="4Q2W"/>
    </source>
</evidence>
<evidence type="ECO:0007829" key="4">
    <source>
        <dbReference type="PDB" id="7PL3"/>
    </source>
</evidence>
<reference key="1">
    <citation type="journal article" date="2001" name="Science">
        <title>Complete genome sequence of a virulent isolate of Streptococcus pneumoniae.</title>
        <authorList>
            <person name="Tettelin H."/>
            <person name="Nelson K.E."/>
            <person name="Paulsen I.T."/>
            <person name="Eisen J.A."/>
            <person name="Read T.D."/>
            <person name="Peterson S.N."/>
            <person name="Heidelberg J.F."/>
            <person name="DeBoy R.T."/>
            <person name="Haft D.H."/>
            <person name="Dodson R.J."/>
            <person name="Durkin A.S."/>
            <person name="Gwinn M.L."/>
            <person name="Kolonay J.F."/>
            <person name="Nelson W.C."/>
            <person name="Peterson J.D."/>
            <person name="Umayam L.A."/>
            <person name="White O."/>
            <person name="Salzberg S.L."/>
            <person name="Lewis M.R."/>
            <person name="Radune D."/>
            <person name="Holtzapple E.K."/>
            <person name="Khouri H.M."/>
            <person name="Wolf A.M."/>
            <person name="Utterback T.R."/>
            <person name="Hansen C.L."/>
            <person name="McDonald L.A."/>
            <person name="Feldblyum T.V."/>
            <person name="Angiuoli S.V."/>
            <person name="Dickinson T."/>
            <person name="Hickey E.K."/>
            <person name="Holt I.E."/>
            <person name="Loftus B.J."/>
            <person name="Yang F."/>
            <person name="Smith H.O."/>
            <person name="Venter J.C."/>
            <person name="Dougherty B.A."/>
            <person name="Morrison D.A."/>
            <person name="Hollingshead S.K."/>
            <person name="Fraser C.M."/>
        </authorList>
    </citation>
    <scope>NUCLEOTIDE SEQUENCE [LARGE SCALE GENOMIC DNA]</scope>
    <source>
        <strain>ATCC BAA-334 / TIGR4</strain>
    </source>
</reference>
<gene>
    <name type="primary">lytB</name>
    <name type="ordered locus">SP_0965</name>
</gene>
<keyword id="KW-0002">3D-structure</keyword>
<keyword id="KW-0961">Cell wall biogenesis/degradation</keyword>
<keyword id="KW-0378">Hydrolase</keyword>
<keyword id="KW-1185">Reference proteome</keyword>
<keyword id="KW-0677">Repeat</keyword>
<keyword id="KW-0964">Secreted</keyword>
<keyword id="KW-0732">Signal</keyword>
<comment type="function">
    <text evidence="1">Plays an important role in cell wall degradation and cell separation.</text>
</comment>
<comment type="catalytic activity">
    <reaction>
        <text>an N(4)-(oligosaccharide-(1-&gt;3)-[oligosaccharide-(1-&gt;6)]-beta-D-Man-(1-&gt;4)-beta-D-GlcNAc-(1-&gt;4)-alpha-D-GlcNAc)-L-asparaginyl-[protein] + H2O = an oligosaccharide-(1-&gt;3)-[oligosaccharide-(1-&gt;6)]-beta-D-Man-(1-&gt;4)-D-GlcNAc + N(4)-(N-acetyl-beta-D-glucosaminyl)-L-asparaginyl-[protein]</text>
        <dbReference type="Rhea" id="RHEA:73067"/>
        <dbReference type="Rhea" id="RHEA-COMP:12603"/>
        <dbReference type="Rhea" id="RHEA-COMP:18176"/>
        <dbReference type="ChEBI" id="CHEBI:15377"/>
        <dbReference type="ChEBI" id="CHEBI:132248"/>
        <dbReference type="ChEBI" id="CHEBI:192714"/>
        <dbReference type="ChEBI" id="CHEBI:192715"/>
        <dbReference type="EC" id="3.2.1.96"/>
    </reaction>
</comment>
<comment type="subcellular location">
    <subcellularLocation>
        <location evidence="1">Secreted</location>
    </subcellularLocation>
</comment>
<comment type="similarity">
    <text evidence="2">Belongs to the glycosyl hydrolase 73 family.</text>
</comment>
<protein>
    <recommendedName>
        <fullName>Putative endo-beta-N-acetylglucosaminidase</fullName>
        <ecNumber>3.2.1.96</ecNumber>
    </recommendedName>
    <alternativeName>
        <fullName>Murein hydrolase</fullName>
    </alternativeName>
</protein>
<sequence>MKKVRFIFLALLFFLASPEGAMASDGTWQGKQYLKEDGSQAANEWVFDTHYQSWFYIKADANYAENEWLKQGDDYFYLKSGGYMAKSEWVEDKGAFYYLDQDGKMKRNAWVGTSYVGATGAKVIEDWVYDSQYDAWFYIKADGQHAEKEWLQIKGKDYYFKSGGYLLTSQWINQAYVNASGAKVQQGWLFDKQYQSWFYIKENGNYADKEWIFENGHYYYLKSGGYMAANEWIWDKESWFYLKFDGKMAEKEWVYDSHSQAWYYFKSGGYMTANEWIWDKESWFYLKSDGKIAEKEWVYDSHSQAWYYFKSGGYMTANEWIWDKESWFYLKSDGKIAEKEWVYDSHSQAWYYFKSGGYMAKNETVDGYQLGSDGKWLGGKTTNENAAYYQVVPVTANVYDSDGEKLSYISQGSVVWLDKDRKSDDKRLAITISGLSGYMKTEDLQALDASKDFIPYYESDGHRFYHYVAQNASIPVASHLSDMEVGKKYYSADGLHFDGFKLENPFLFKDLTEATNYSAEELDKVFSLLNINNSLLENKGATFKEAEEHYHINALYLLAHSALESNWGRSKIAKDKNNFFGITAYDTTPYLSAKTFDDVDKGILGATKWIKENYIDRGRTFLGNKASGMNVEYASDPYWGEKIASVMMKINEKLGGKD</sequence>